<reference key="1">
    <citation type="journal article" date="2000" name="Biochem. Biophys. Res. Commun.">
        <title>Molecular cloning of a novel form (two-repeat) protein related to voltage-gated sodium and calcium channels.</title>
        <authorList>
            <person name="Ishibashi K."/>
            <person name="Suzuki M."/>
            <person name="Imai M."/>
        </authorList>
    </citation>
    <scope>NUCLEOTIDE SEQUENCE [MRNA]</scope>
    <scope>SUBUNIT</scope>
    <scope>TISSUE SPECIFICITY</scope>
    <source>
        <tissue>Kidney</tissue>
    </source>
</reference>
<reference key="2">
    <citation type="journal article" date="2004" name="Genome Res.">
        <title>The status, quality, and expansion of the NIH full-length cDNA project: the Mammalian Gene Collection (MGC).</title>
        <authorList>
            <consortium name="The MGC Project Team"/>
        </authorList>
    </citation>
    <scope>NUCLEOTIDE SEQUENCE [LARGE SCALE MRNA]</scope>
    <source>
        <tissue>Prostate</tissue>
    </source>
</reference>
<organism>
    <name type="scientific">Rattus norvegicus</name>
    <name type="common">Rat</name>
    <dbReference type="NCBI Taxonomy" id="10116"/>
    <lineage>
        <taxon>Eukaryota</taxon>
        <taxon>Metazoa</taxon>
        <taxon>Chordata</taxon>
        <taxon>Craniata</taxon>
        <taxon>Vertebrata</taxon>
        <taxon>Euteleostomi</taxon>
        <taxon>Mammalia</taxon>
        <taxon>Eutheria</taxon>
        <taxon>Euarchontoglires</taxon>
        <taxon>Glires</taxon>
        <taxon>Rodentia</taxon>
        <taxon>Myomorpha</taxon>
        <taxon>Muroidea</taxon>
        <taxon>Muridae</taxon>
        <taxon>Murinae</taxon>
        <taxon>Rattus</taxon>
    </lineage>
</organism>
<keyword id="KW-0106">Calcium</keyword>
<keyword id="KW-0107">Calcium channel</keyword>
<keyword id="KW-0109">Calcium transport</keyword>
<keyword id="KW-0175">Coiled coil</keyword>
<keyword id="KW-0967">Endosome</keyword>
<keyword id="KW-0407">Ion channel</keyword>
<keyword id="KW-0406">Ion transport</keyword>
<keyword id="KW-0458">Lysosome</keyword>
<keyword id="KW-0472">Membrane</keyword>
<keyword id="KW-1185">Reference proteome</keyword>
<keyword id="KW-0677">Repeat</keyword>
<keyword id="KW-0812">Transmembrane</keyword>
<keyword id="KW-1133">Transmembrane helix</keyword>
<keyword id="KW-0813">Transport</keyword>
<keyword id="KW-0851">Voltage-gated channel</keyword>
<dbReference type="EMBL" id="AB018253">
    <property type="protein sequence ID" value="BAA76556.2"/>
    <property type="molecule type" value="mRNA"/>
</dbReference>
<dbReference type="EMBL" id="BC062072">
    <property type="protein sequence ID" value="AAH62072.1"/>
    <property type="molecule type" value="mRNA"/>
</dbReference>
<dbReference type="PIR" id="JC7240">
    <property type="entry name" value="JC7240"/>
</dbReference>
<dbReference type="RefSeq" id="NP_647548.2">
    <property type="nucleotide sequence ID" value="NM_139332.3"/>
</dbReference>
<dbReference type="SMR" id="Q9WTN5"/>
<dbReference type="FunCoup" id="Q9WTN5">
    <property type="interactions" value="405"/>
</dbReference>
<dbReference type="STRING" id="10116.ENSRNOP00000074914"/>
<dbReference type="GlyGen" id="Q9WTN5">
    <property type="glycosylation" value="1 site"/>
</dbReference>
<dbReference type="iPTMnet" id="Q9WTN5"/>
<dbReference type="PhosphoSitePlus" id="Q9WTN5"/>
<dbReference type="PaxDb" id="10116-ENSRNOP00000001866"/>
<dbReference type="GeneID" id="246215"/>
<dbReference type="KEGG" id="rno:246215"/>
<dbReference type="UCSC" id="RGD:708494">
    <property type="organism name" value="rat"/>
</dbReference>
<dbReference type="AGR" id="RGD:708494"/>
<dbReference type="CTD" id="53373"/>
<dbReference type="RGD" id="708494">
    <property type="gene designation" value="Tpcn1"/>
</dbReference>
<dbReference type="eggNOG" id="KOG2301">
    <property type="taxonomic scope" value="Eukaryota"/>
</dbReference>
<dbReference type="InParanoid" id="Q9WTN5"/>
<dbReference type="OrthoDB" id="10068803at2759"/>
<dbReference type="PhylomeDB" id="Q9WTN5"/>
<dbReference type="Reactome" id="R-RNO-2672351">
    <property type="pathway name" value="Stimuli-sensing channels"/>
</dbReference>
<dbReference type="PRO" id="PR:Q9WTN5"/>
<dbReference type="Proteomes" id="UP000002494">
    <property type="component" value="Unplaced"/>
</dbReference>
<dbReference type="GO" id="GO:0031901">
    <property type="term" value="C:early endosome membrane"/>
    <property type="evidence" value="ECO:0000250"/>
    <property type="project" value="UniProtKB"/>
</dbReference>
<dbReference type="GO" id="GO:0036019">
    <property type="term" value="C:endolysosome"/>
    <property type="evidence" value="ECO:0000250"/>
    <property type="project" value="UniProtKB"/>
</dbReference>
<dbReference type="GO" id="GO:0010008">
    <property type="term" value="C:endosome membrane"/>
    <property type="evidence" value="ECO:0000250"/>
    <property type="project" value="UniProtKB"/>
</dbReference>
<dbReference type="GO" id="GO:0005765">
    <property type="term" value="C:lysosomal membrane"/>
    <property type="evidence" value="ECO:0000250"/>
    <property type="project" value="UniProtKB"/>
</dbReference>
<dbReference type="GO" id="GO:0016020">
    <property type="term" value="C:membrane"/>
    <property type="evidence" value="ECO:0000266"/>
    <property type="project" value="RGD"/>
</dbReference>
<dbReference type="GO" id="GO:0034702">
    <property type="term" value="C:monoatomic ion channel complex"/>
    <property type="evidence" value="ECO:0007669"/>
    <property type="project" value="UniProtKB-KW"/>
</dbReference>
<dbReference type="GO" id="GO:0055038">
    <property type="term" value="C:recycling endosome membrane"/>
    <property type="evidence" value="ECO:0000250"/>
    <property type="project" value="UniProtKB"/>
</dbReference>
<dbReference type="GO" id="GO:0042802">
    <property type="term" value="F:identical protein binding"/>
    <property type="evidence" value="ECO:0000266"/>
    <property type="project" value="RGD"/>
</dbReference>
<dbReference type="GO" id="GO:0097682">
    <property type="term" value="F:intracellularly phosphatidylinositol-3,5-bisphosphate-gated monatomic cation channel activity"/>
    <property type="evidence" value="ECO:0000250"/>
    <property type="project" value="UniProtKB"/>
</dbReference>
<dbReference type="GO" id="GO:0015280">
    <property type="term" value="F:ligand-gated sodium channel activity"/>
    <property type="evidence" value="ECO:0000250"/>
    <property type="project" value="UniProtKB"/>
</dbReference>
<dbReference type="GO" id="GO:0072345">
    <property type="term" value="F:NAADP-sensitive calcium-release channel activity"/>
    <property type="evidence" value="ECO:0000266"/>
    <property type="project" value="RGD"/>
</dbReference>
<dbReference type="GO" id="GO:0080025">
    <property type="term" value="F:phosphatidylinositol-3,5-bisphosphate binding"/>
    <property type="evidence" value="ECO:0000266"/>
    <property type="project" value="RGD"/>
</dbReference>
<dbReference type="GO" id="GO:0042803">
    <property type="term" value="F:protein homodimerization activity"/>
    <property type="evidence" value="ECO:0000266"/>
    <property type="project" value="RGD"/>
</dbReference>
<dbReference type="GO" id="GO:0019905">
    <property type="term" value="F:syntaxin binding"/>
    <property type="evidence" value="ECO:0000266"/>
    <property type="project" value="RGD"/>
</dbReference>
<dbReference type="GO" id="GO:0022832">
    <property type="term" value="F:voltage-gated channel activity"/>
    <property type="evidence" value="ECO:0007669"/>
    <property type="project" value="InterPro"/>
</dbReference>
<dbReference type="GO" id="GO:0005248">
    <property type="term" value="F:voltage-gated sodium channel activity"/>
    <property type="evidence" value="ECO:0000250"/>
    <property type="project" value="UniProtKB"/>
</dbReference>
<dbReference type="GO" id="GO:0075509">
    <property type="term" value="P:endocytosis involved in viral entry into host cell"/>
    <property type="evidence" value="ECO:0000266"/>
    <property type="project" value="RGD"/>
</dbReference>
<dbReference type="GO" id="GO:0010508">
    <property type="term" value="P:positive regulation of autophagy"/>
    <property type="evidence" value="ECO:0000266"/>
    <property type="project" value="RGD"/>
</dbReference>
<dbReference type="GO" id="GO:0035725">
    <property type="term" value="P:sodium ion transmembrane transport"/>
    <property type="evidence" value="ECO:0000266"/>
    <property type="project" value="RGD"/>
</dbReference>
<dbReference type="FunFam" id="1.10.287.70:FF:000062">
    <property type="entry name" value="Two pore calcium channel protein 1"/>
    <property type="match status" value="1"/>
</dbReference>
<dbReference type="FunFam" id="1.10.287.70:FF:000071">
    <property type="entry name" value="Two pore calcium channel protein 1"/>
    <property type="match status" value="1"/>
</dbReference>
<dbReference type="FunFam" id="1.20.120.350:FF:000031">
    <property type="entry name" value="Two pore calcium channel protein 1"/>
    <property type="match status" value="1"/>
</dbReference>
<dbReference type="Gene3D" id="1.10.287.70">
    <property type="match status" value="2"/>
</dbReference>
<dbReference type="Gene3D" id="1.20.120.350">
    <property type="entry name" value="Voltage-gated potassium channels. Chain C"/>
    <property type="match status" value="1"/>
</dbReference>
<dbReference type="InterPro" id="IPR005821">
    <property type="entry name" value="Ion_trans_dom"/>
</dbReference>
<dbReference type="InterPro" id="IPR028801">
    <property type="entry name" value="TPC1_animal"/>
</dbReference>
<dbReference type="InterPro" id="IPR027359">
    <property type="entry name" value="Volt_channel_dom_sf"/>
</dbReference>
<dbReference type="PANTHER" id="PTHR46474">
    <property type="entry name" value="TWO PORE CALCIUM CHANNEL PROTEIN 1"/>
    <property type="match status" value="1"/>
</dbReference>
<dbReference type="PANTHER" id="PTHR46474:SF1">
    <property type="entry name" value="TWO PORE CHANNEL PROTEIN 1"/>
    <property type="match status" value="1"/>
</dbReference>
<dbReference type="Pfam" id="PF00520">
    <property type="entry name" value="Ion_trans"/>
    <property type="match status" value="2"/>
</dbReference>
<dbReference type="SUPFAM" id="SSF81324">
    <property type="entry name" value="Voltage-gated potassium channels"/>
    <property type="match status" value="2"/>
</dbReference>
<evidence type="ECO:0000250" key="1">
    <source>
        <dbReference type="UniProtKB" id="Q8NHX9"/>
    </source>
</evidence>
<evidence type="ECO:0000250" key="2">
    <source>
        <dbReference type="UniProtKB" id="Q9EQJ0"/>
    </source>
</evidence>
<evidence type="ECO:0000250" key="3">
    <source>
        <dbReference type="UniProtKB" id="Q9ULQ1"/>
    </source>
</evidence>
<evidence type="ECO:0000255" key="4"/>
<evidence type="ECO:0000256" key="5">
    <source>
        <dbReference type="SAM" id="MobiDB-lite"/>
    </source>
</evidence>
<evidence type="ECO:0000269" key="6">
    <source>
    </source>
</evidence>
<evidence type="ECO:0000305" key="7"/>
<gene>
    <name type="primary">Tpcn1</name>
    <name type="synonym">Tpc1</name>
</gene>
<proteinExistence type="evidence at protein level"/>
<accession>Q9WTN5</accession>
<accession>Q6P6R1</accession>
<protein>
    <recommendedName>
        <fullName>Two pore calcium channel protein 1</fullName>
    </recommendedName>
    <alternativeName>
        <fullName>Voltage-dependent calcium channel protein TPC1</fullName>
    </alternativeName>
</protein>
<name>TPC1_RAT</name>
<sequence>MSVILDDDVLLILTLDEELSAPLTPSNGLGQEDLPSKNGGGQSGPNSQVPSLVSGADSPPSSPPGHNWEMNYQEAAIYLQEGQNNDKFFTHPKDARALAAYLFVHNHFFYMMELLTALLLLLLSLCESPAVPALKLRTYVHATLELFALMVVVFELCMKLRWLGFHTFVRHKRTMVKTSVLVVQFIEAIVVLVRQTSHVRVTRALRCIFLVDCRYCGGVRRNLRQIFQSLPPFMDILLLLLFFMIIFAILGFYLFSTNPSDPYFNTLENSIVNLFVLLTTANFPDVMMPSYSRNPWSCVFFIVYLSIELYFIMNLLLAVVFDTFNDIEKHKFKSLLLHKRTAIQHAYHLLVSQRRPAGISYRQFEGLMRFYKPRMSARERFLTFKALNQSNTPLLSLKDFYDIYEVAALQWKAKKNRQHWFDELPRTAFLIFKGINILVNSKAFQYFMYLVVAVNGVWILVETFMLKGGNFISKHVPWSYLVFLTIYGVELFMKVAGLGPVEYLSSGWNLFDFSVTAFAFLGLLALTLNMEPFYFIVVLRPLQLLRLFKLKKRYRNVLDTMFELLPRMASLGLTLLTFYYSFAIVGMEFFSGRLSPNCCNSSTVADAYRFINHTVGNKTKVEEGYYYLNNFDNILNSFVTLFELTVVNNWYIIMEGVTSQTSHWSRLYFMTFYIVTMVVMTIIVAFILEAFVFRMNYSRKSQESEVDSGIVIEKEMSKEELLAILELHREARGTSSDVTRLLDTLSQMEKYQQNSMVFLGRRSRTKSDLSLKMYQEEIQEWYEEHAREQEQQQLRGSAPSPAAQQTPGSRQRSQTVT</sequence>
<feature type="chain" id="PRO_0000276855" description="Two pore calcium channel protein 1">
    <location>
        <begin position="1"/>
        <end position="817"/>
    </location>
</feature>
<feature type="topological domain" description="Cytoplasmic" evidence="4">
    <location>
        <begin position="1"/>
        <end position="101"/>
    </location>
</feature>
<feature type="transmembrane region" description="Helical; Name=S1 of repeat I" evidence="4">
    <location>
        <begin position="102"/>
        <end position="122"/>
    </location>
</feature>
<feature type="topological domain" description="Extracellular" evidence="4">
    <location>
        <begin position="123"/>
        <end position="137"/>
    </location>
</feature>
<feature type="transmembrane region" description="Helical; Name=S2 of repeat I" evidence="4">
    <location>
        <begin position="138"/>
        <end position="158"/>
    </location>
</feature>
<feature type="topological domain" description="Cytoplasmic" evidence="4">
    <location>
        <begin position="159"/>
        <end position="172"/>
    </location>
</feature>
<feature type="transmembrane region" description="Helical; Name=S3 of repeat I" evidence="4">
    <location>
        <begin position="173"/>
        <end position="193"/>
    </location>
</feature>
<feature type="topological domain" description="Extracellular" evidence="4">
    <location>
        <begin position="194"/>
        <end position="202"/>
    </location>
</feature>
<feature type="transmembrane region" description="Helical; Name=S4 of repeat I" evidence="4">
    <location>
        <begin position="203"/>
        <end position="221"/>
    </location>
</feature>
<feature type="topological domain" description="Cytoplasmic" evidence="4">
    <location>
        <begin position="222"/>
        <end position="235"/>
    </location>
</feature>
<feature type="transmembrane region" description="Helical; Name=S5 of repeat I" evidence="4">
    <location>
        <begin position="236"/>
        <end position="256"/>
    </location>
</feature>
<feature type="topological domain" description="Extracellular" evidence="4">
    <location>
        <begin position="257"/>
        <end position="263"/>
    </location>
</feature>
<feature type="intramembrane region" description="Helical; Pore-forming" evidence="4">
    <location>
        <begin position="264"/>
        <end position="287"/>
    </location>
</feature>
<feature type="topological domain" description="Extracellular" evidence="4">
    <location>
        <begin position="288"/>
        <end position="298"/>
    </location>
</feature>
<feature type="transmembrane region" description="Helical; Name=S6 of repeat I" evidence="4">
    <location>
        <begin position="299"/>
        <end position="319"/>
    </location>
</feature>
<feature type="topological domain" description="Cytoplasmic" evidence="4">
    <location>
        <begin position="320"/>
        <end position="445"/>
    </location>
</feature>
<feature type="transmembrane region" description="Helical; Name=S1 of repeat II" evidence="4">
    <location>
        <begin position="446"/>
        <end position="466"/>
    </location>
</feature>
<feature type="topological domain" description="Extracellular" evidence="4">
    <location>
        <begin position="467"/>
        <end position="480"/>
    </location>
</feature>
<feature type="transmembrane region" description="Helical; Name=S2 of repeat II" evidence="4">
    <location>
        <begin position="481"/>
        <end position="501"/>
    </location>
</feature>
<feature type="topological domain" description="Cytoplasmic" evidence="4">
    <location>
        <begin position="502"/>
        <end position="504"/>
    </location>
</feature>
<feature type="transmembrane region" description="Helical; Name=S3 of repeat II" evidence="4">
    <location>
        <begin position="505"/>
        <end position="527"/>
    </location>
</feature>
<feature type="topological domain" description="Extracellular" evidence="4">
    <location>
        <begin position="528"/>
        <end position="535"/>
    </location>
</feature>
<feature type="transmembrane region" description="Helical; Name=S4 of repeat II" evidence="4">
    <location>
        <begin position="536"/>
        <end position="550"/>
    </location>
</feature>
<feature type="topological domain" description="Cytoplasmic" evidence="4">
    <location>
        <begin position="551"/>
        <end position="574"/>
    </location>
</feature>
<feature type="transmembrane region" description="Helical; Name=S5 of repeat II" evidence="4">
    <location>
        <begin position="575"/>
        <end position="595"/>
    </location>
</feature>
<feature type="topological domain" description="Extracellular" evidence="4">
    <location>
        <begin position="596"/>
        <end position="630"/>
    </location>
</feature>
<feature type="intramembrane region" description="Helical; Pore-forming" evidence="4">
    <location>
        <begin position="631"/>
        <end position="654"/>
    </location>
</feature>
<feature type="topological domain" description="Extracellular" evidence="4">
    <location>
        <begin position="655"/>
        <end position="671"/>
    </location>
</feature>
<feature type="transmembrane region" description="Helical; Name=S6 of repeat II" evidence="4">
    <location>
        <begin position="672"/>
        <end position="692"/>
    </location>
</feature>
<feature type="topological domain" description="Cytoplasmic" evidence="4">
    <location>
        <begin position="693"/>
        <end position="817"/>
    </location>
</feature>
<feature type="region of interest" description="Disordered" evidence="5">
    <location>
        <begin position="22"/>
        <end position="66"/>
    </location>
</feature>
<feature type="region of interest" description="Disordered" evidence="5">
    <location>
        <begin position="785"/>
        <end position="817"/>
    </location>
</feature>
<feature type="coiled-coil region" evidence="4">
    <location>
        <begin position="770"/>
        <end position="794"/>
    </location>
</feature>
<feature type="compositionally biased region" description="Polar residues" evidence="5">
    <location>
        <begin position="802"/>
        <end position="817"/>
    </location>
</feature>
<comment type="function">
    <text evidence="3">Intracellular channel initially characterized as a non-selective Ca(2+)-permeable channel activated by NAADP (nicotinic acid adenine dinucleotide phosphate), it is also a voltage-gated highly-selective Na(+) channel activated directly by PI(3,5)P2 (phosphatidylinositol 3,5-bisphosphate) that senses pH changes and confers electrical excitability to organelles. Localizes to the early and recycling endosomes membranes where it plays a role in the uptake and processing of proteins and regulates organellar membrane excitability, membrane trafficking and pH homeostasis. Ion selectivity is not fixed but rather agonist-dependent and under defined ionic conditions, can be readily activated by both NAADP and PI(3,5)P2. Required for mTOR-dependent nutrient sensing.</text>
</comment>
<comment type="catalytic activity">
    <reaction evidence="3">
        <text>Na(+)(in) = Na(+)(out)</text>
        <dbReference type="Rhea" id="RHEA:34963"/>
        <dbReference type="ChEBI" id="CHEBI:29101"/>
    </reaction>
    <physiologicalReaction direction="right-to-left" evidence="3">
        <dbReference type="Rhea" id="RHEA:34965"/>
    </physiologicalReaction>
</comment>
<comment type="catalytic activity">
    <reaction evidence="3">
        <text>Ca(2+)(in) = Ca(2+)(out)</text>
        <dbReference type="Rhea" id="RHEA:29671"/>
        <dbReference type="ChEBI" id="CHEBI:29108"/>
    </reaction>
    <physiologicalReaction direction="right-to-left" evidence="3">
        <dbReference type="Rhea" id="RHEA:29673"/>
    </physiologicalReaction>
</comment>
<comment type="activity regulation">
    <text evidence="1 3">Na(+) current is inhibited by ATP in a MTORC-dependent manner. ATP sensitivity is independent of PI(3,5)P2 (By similarity). Probably regulated by Mg(2+) ions, cytosolic Mg(2+) selectively inhibits outward current while lysosomal Mg(2+) modestly inhibits both the outward and inward currents. In the absence of Mg(2+), NAADP readily activates TPCN2, with properties similar to PI(3,5)P2 (By similarity). Both current elicited by PI(3,5)P2 as well as NAADP are inhibited by tetrandrine (By similarity).</text>
</comment>
<comment type="subunit">
    <text evidence="2 3">Dimer. Interacts with MTOR; the interaction is required for TPCN1 ATP sensitivity (By similarity). Interacts with STX7, STX8 and STX12 (By similarity). Interacts with JPT2 (By similarity). Found in a complex with LSM12, TPCN1 and TPCN2 (By similarity).</text>
</comment>
<comment type="subcellular location">
    <subcellularLocation>
        <location evidence="3">Lysosome membrane</location>
        <topology evidence="3">Multi-pass membrane protein</topology>
    </subcellularLocation>
    <subcellularLocation>
        <location evidence="3">Endosome membrane</location>
        <topology evidence="3">Multi-pass membrane protein</topology>
    </subcellularLocation>
    <subcellularLocation>
        <location evidence="2">Early endosome membrane</location>
        <topology evidence="2">Multi-pass membrane protein</topology>
    </subcellularLocation>
    <subcellularLocation>
        <location evidence="2">Recycling endosome membrane</location>
        <topology evidence="2">Multi-pass membrane protein</topology>
    </subcellularLocation>
</comment>
<comment type="tissue specificity">
    <text evidence="6">Widely expressed. Expressed at relatively high level in kidney, liver and lung, and in the kidney it is expressed at inner medullary collecting ducts.</text>
</comment>
<comment type="domain">
    <text evidence="3">Each of the two internal repeats contains five hydrophobic transmembrane segments (S1, S2, S3, S5, S6) and one positively charged transmembrane segment (S4). S4 segments represent the voltage-sensor and are characterized by a series of positively charged amino acids at every third position.</text>
</comment>
<comment type="PTM">
    <text evidence="2">N-glycosylated.</text>
</comment>
<comment type="similarity">
    <text evidence="7">Belongs to the calcium channel alpha-1 subunit (TC 1.A.1.11) family. Two pore calcium channel subfamily.</text>
</comment>